<proteinExistence type="evidence at transcript level"/>
<organism>
    <name type="scientific">Canis lupus familiaris</name>
    <name type="common">Dog</name>
    <name type="synonym">Canis familiaris</name>
    <dbReference type="NCBI Taxonomy" id="9615"/>
    <lineage>
        <taxon>Eukaryota</taxon>
        <taxon>Metazoa</taxon>
        <taxon>Chordata</taxon>
        <taxon>Craniata</taxon>
        <taxon>Vertebrata</taxon>
        <taxon>Euteleostomi</taxon>
        <taxon>Mammalia</taxon>
        <taxon>Eutheria</taxon>
        <taxon>Laurasiatheria</taxon>
        <taxon>Carnivora</taxon>
        <taxon>Caniformia</taxon>
        <taxon>Canidae</taxon>
        <taxon>Canis</taxon>
    </lineage>
</organism>
<feature type="propeptide" id="PRO_0000015339" evidence="1">
    <location>
        <begin position="1"/>
        <end position="36"/>
    </location>
</feature>
<feature type="chain" id="PRO_0000015340" description="Interleukin-18">
    <location>
        <begin position="37"/>
        <end position="193"/>
    </location>
</feature>
<feature type="site" description="Cleavage; by CASP1, CASP4 and CASP5" evidence="2">
    <location>
        <begin position="36"/>
        <end position="37"/>
    </location>
</feature>
<feature type="site" description="Cleavage; by CASP3" evidence="2">
    <location>
        <begin position="71"/>
        <end position="72"/>
    </location>
</feature>
<dbReference type="EMBL" id="Y11133">
    <property type="protein sequence ID" value="CAA72015.1"/>
    <property type="molecule type" value="mRNA"/>
</dbReference>
<dbReference type="RefSeq" id="NP_001003169.1">
    <property type="nucleotide sequence ID" value="NM_001003169.1"/>
</dbReference>
<dbReference type="SMR" id="Q9XSR0"/>
<dbReference type="FunCoup" id="Q9XSR0">
    <property type="interactions" value="126"/>
</dbReference>
<dbReference type="STRING" id="9615.ENSCAFP00000038185"/>
<dbReference type="PaxDb" id="9612-ENSCAFP00000038185"/>
<dbReference type="GeneID" id="403796"/>
<dbReference type="KEGG" id="cfa:403796"/>
<dbReference type="CTD" id="3606"/>
<dbReference type="eggNOG" id="ENOG502SDJZ">
    <property type="taxonomic scope" value="Eukaryota"/>
</dbReference>
<dbReference type="InParanoid" id="Q9XSR0"/>
<dbReference type="OrthoDB" id="8535973at2759"/>
<dbReference type="Proteomes" id="UP000002254">
    <property type="component" value="Unplaced"/>
</dbReference>
<dbReference type="Proteomes" id="UP000694429">
    <property type="component" value="Unplaced"/>
</dbReference>
<dbReference type="Proteomes" id="UP000694542">
    <property type="component" value="Unplaced"/>
</dbReference>
<dbReference type="Proteomes" id="UP000805418">
    <property type="component" value="Unplaced"/>
</dbReference>
<dbReference type="GO" id="GO:0005829">
    <property type="term" value="C:cytosol"/>
    <property type="evidence" value="ECO:0007669"/>
    <property type="project" value="UniProtKB-SubCell"/>
</dbReference>
<dbReference type="GO" id="GO:0005576">
    <property type="term" value="C:extracellular region"/>
    <property type="evidence" value="ECO:0000304"/>
    <property type="project" value="UniProtKB"/>
</dbReference>
<dbReference type="GO" id="GO:0005615">
    <property type="term" value="C:extracellular space"/>
    <property type="evidence" value="ECO:0000318"/>
    <property type="project" value="GO_Central"/>
</dbReference>
<dbReference type="GO" id="GO:0005125">
    <property type="term" value="F:cytokine activity"/>
    <property type="evidence" value="ECO:0000250"/>
    <property type="project" value="UniProtKB"/>
</dbReference>
<dbReference type="GO" id="GO:0045515">
    <property type="term" value="F:interleukin-18 receptor binding"/>
    <property type="evidence" value="ECO:0000250"/>
    <property type="project" value="UniProtKB"/>
</dbReference>
<dbReference type="GO" id="GO:0071222">
    <property type="term" value="P:cellular response to lipopolysaccharide"/>
    <property type="evidence" value="ECO:0000318"/>
    <property type="project" value="GO_Central"/>
</dbReference>
<dbReference type="GO" id="GO:0019221">
    <property type="term" value="P:cytokine-mediated signaling pathway"/>
    <property type="evidence" value="ECO:0000318"/>
    <property type="project" value="GO_Central"/>
</dbReference>
<dbReference type="GO" id="GO:0050830">
    <property type="term" value="P:defense response to Gram-positive bacterium"/>
    <property type="evidence" value="ECO:0000250"/>
    <property type="project" value="UniProtKB"/>
</dbReference>
<dbReference type="GO" id="GO:0061436">
    <property type="term" value="P:establishment of skin barrier"/>
    <property type="evidence" value="ECO:0000250"/>
    <property type="project" value="UniProtKB"/>
</dbReference>
<dbReference type="GO" id="GO:0008625">
    <property type="term" value="P:extrinsic apoptotic signaling pathway via death domain receptors"/>
    <property type="evidence" value="ECO:0000270"/>
    <property type="project" value="UniProtKB"/>
</dbReference>
<dbReference type="GO" id="GO:0006955">
    <property type="term" value="P:immune response"/>
    <property type="evidence" value="ECO:0000318"/>
    <property type="project" value="GO_Central"/>
</dbReference>
<dbReference type="GO" id="GO:0006954">
    <property type="term" value="P:inflammatory response"/>
    <property type="evidence" value="ECO:0000318"/>
    <property type="project" value="GO_Central"/>
</dbReference>
<dbReference type="GO" id="GO:0035655">
    <property type="term" value="P:interleukin-18-mediated signaling pathway"/>
    <property type="evidence" value="ECO:0000250"/>
    <property type="project" value="UniProtKB"/>
</dbReference>
<dbReference type="GO" id="GO:0042104">
    <property type="term" value="P:positive regulation of activated T cell proliferation"/>
    <property type="evidence" value="ECO:0000250"/>
    <property type="project" value="UniProtKB"/>
</dbReference>
<dbReference type="GO" id="GO:0050729">
    <property type="term" value="P:positive regulation of inflammatory response"/>
    <property type="evidence" value="ECO:0000250"/>
    <property type="project" value="UniProtKB"/>
</dbReference>
<dbReference type="GO" id="GO:0051092">
    <property type="term" value="P:positive regulation of NF-kappaB transcription factor activity"/>
    <property type="evidence" value="ECO:0000250"/>
    <property type="project" value="UniProtKB"/>
</dbReference>
<dbReference type="GO" id="GO:2000556">
    <property type="term" value="P:positive regulation of T-helper 1 cell cytokine production"/>
    <property type="evidence" value="ECO:0000250"/>
    <property type="project" value="UniProtKB"/>
</dbReference>
<dbReference type="GO" id="GO:0032729">
    <property type="term" value="P:positive regulation of type II interferon production"/>
    <property type="evidence" value="ECO:0000314"/>
    <property type="project" value="UniProtKB"/>
</dbReference>
<dbReference type="CDD" id="cd23298">
    <property type="entry name" value="beta-trefoil_IL18"/>
    <property type="match status" value="1"/>
</dbReference>
<dbReference type="FunFam" id="2.80.10.50:FF:000043">
    <property type="entry name" value="Interleukin-18"/>
    <property type="match status" value="1"/>
</dbReference>
<dbReference type="Gene3D" id="2.80.10.50">
    <property type="match status" value="1"/>
</dbReference>
<dbReference type="InterPro" id="IPR015529">
    <property type="entry name" value="IL-18"/>
</dbReference>
<dbReference type="InterPro" id="IPR000975">
    <property type="entry name" value="IL-1_fam"/>
</dbReference>
<dbReference type="InterPro" id="IPR008996">
    <property type="entry name" value="IL1/FGF"/>
</dbReference>
<dbReference type="PANTHER" id="PTHR10078">
    <property type="entry name" value="INTERLEUKIN-1 FAMILY MEMBER"/>
    <property type="match status" value="1"/>
</dbReference>
<dbReference type="PANTHER" id="PTHR10078:SF35">
    <property type="entry name" value="INTERLEUKIN-18"/>
    <property type="match status" value="1"/>
</dbReference>
<dbReference type="Pfam" id="PF00340">
    <property type="entry name" value="IL1"/>
    <property type="match status" value="1"/>
</dbReference>
<dbReference type="PIRSF" id="PIRSF015162">
    <property type="entry name" value="Interleukin_18"/>
    <property type="match status" value="1"/>
</dbReference>
<dbReference type="PRINTS" id="PR01933">
    <property type="entry name" value="INTRLEUKIN18"/>
</dbReference>
<dbReference type="SUPFAM" id="SSF50353">
    <property type="entry name" value="Cytokine"/>
    <property type="match status" value="1"/>
</dbReference>
<protein>
    <recommendedName>
        <fullName>Interleukin-18</fullName>
        <shortName>IL-18</shortName>
    </recommendedName>
    <alternativeName>
        <fullName>Interferon gamma-inducing factor</fullName>
        <shortName>IFN-gamma-inducing factor</shortName>
    </alternativeName>
    <alternativeName>
        <fullName>Interleukin-1 gamma</fullName>
        <shortName>IL-1 gamma</shortName>
    </alternativeName>
</protein>
<keyword id="KW-0202">Cytokine</keyword>
<keyword id="KW-0963">Cytoplasm</keyword>
<keyword id="KW-0395">Inflammatory response</keyword>
<keyword id="KW-1185">Reference proteome</keyword>
<keyword id="KW-0964">Secreted</keyword>
<gene>
    <name type="primary">IL18</name>
    <name type="synonym">IGIF</name>
</gene>
<comment type="function">
    <text evidence="2">Pro-inflammatory cytokine primarily involved in epithelial barrier repair, polarized T-helper 1 (Th1) cell and natural killer (NK) cell immune responses. Upon binding to IL18R1 and IL18RAP, forms a signaling ternary complex which activates NF-kappa-B, triggering synthesis of inflammatory mediators. Synergizes with IL12/interleukin-12 to induce IFNG synthesis from T-helper 1 (Th1) cells and natural killer (NK) cells. Involved in transduction of inflammation downstream of pyroptosis: its mature form is specifically released in the extracellular milieu by passing through the gasdermin-D (GSDMD) pore.</text>
</comment>
<comment type="subunit">
    <text evidence="2">Forms a ternary complex with ligand-binding receptor subunit IL18R1 and signaling receptor subunit IL18RAP at the plasma membrane. Mature IL18 first binds to IL18R1 forming a low affinity binary complex, which then interacts with IL18RAP to form a high affinity ternary complex that signals inside the cell. Interacts with cargo receptor TMED10; the interaction mediates the translocation from the cytoplasm into the ERGIC (endoplasmic reticulum-Golgi intermediate compartment) and thereby secretion.</text>
</comment>
<comment type="subcellular location">
    <subcellularLocation>
        <location evidence="2">Cytoplasm</location>
        <location evidence="2">Cytosol</location>
    </subcellularLocation>
    <subcellularLocation>
        <location evidence="2">Secreted</location>
    </subcellularLocation>
    <text evidence="2">The precursor is cytosolic. In response to inflammasome-activating signals, cleaved and secreted. Mature form is secreted and released in the extracellular milieu by passing through the gasdermin-D (GSDMD) pore. In contrast, the precursor form is not released, due to the presence of an acidic region that is proteolytically removed by CASP1, CASP4 or CASP5 during maturation. The secretion is dependent on protein unfolding and facilitated by the cargo receptor TMED10.</text>
</comment>
<comment type="PTM">
    <text evidence="2">The pro-IL-18 precursor is processed by CASP1, CASP4 or CASP5 to yield its mature, active form. The pro-IL-18 precursor features autoinhibitory interactions between the propeptide and the post-cleavage-site region, preventing recognition by the IL18R1 receptor. Processing by CASP1, CASP4 or CASP5 induces conformational changes to generate critical receptor-binding sites. The mature form is then secreted and released in the extracellular milieu by passing through the gasdermin-D (GSDMD) pore. In contrast, cleavage by CASP3 inactivates IL18.</text>
</comment>
<comment type="similarity">
    <text evidence="3">Belongs to the IL-1 family.</text>
</comment>
<accession>Q9XSR0</accession>
<evidence type="ECO:0000250" key="1">
    <source>
        <dbReference type="UniProtKB" id="P70380"/>
    </source>
</evidence>
<evidence type="ECO:0000250" key="2">
    <source>
        <dbReference type="UniProtKB" id="Q14116"/>
    </source>
</evidence>
<evidence type="ECO:0000305" key="3"/>
<sequence>MAANLIEDNCINLVKMKFVNNTLYFKAESDEGLESDYFGKLEPKLSIIRNLNDQVLFVNEGNQPVFEDMPDSDCTDNAPHTIFIIYMYKDSLTRGLAVTISVKYKTMSTLSCKNKTISFQKMSPPDSINDEGNDIIFFQRSVPGHDDKIQFESSLYKGHFLACKKENDLFKLILKDKDENGDKSIMFTVQNKS</sequence>
<reference key="1">
    <citation type="journal article" date="1999" name="Immunogenetics">
        <title>Cloning, sequencing, and characterization of dog interleukin-18.</title>
        <authorList>
            <person name="Argyle D.J."/>
            <person name="McGillivery C."/>
            <person name="Nicolson L."/>
            <person name="Onions D.E."/>
        </authorList>
    </citation>
    <scope>NUCLEOTIDE SEQUENCE [MRNA]</scope>
</reference>
<name>IL18_CANLF</name>